<evidence type="ECO:0000250" key="1"/>
<evidence type="ECO:0000250" key="2">
    <source>
        <dbReference type="UniProtKB" id="P05231"/>
    </source>
</evidence>
<evidence type="ECO:0000255" key="3"/>
<evidence type="ECO:0000256" key="4">
    <source>
        <dbReference type="SAM" id="MobiDB-lite"/>
    </source>
</evidence>
<evidence type="ECO:0000269" key="5">
    <source>
    </source>
</evidence>
<evidence type="ECO:0000305" key="6"/>
<keyword id="KW-0011">Acute phase</keyword>
<keyword id="KW-0202">Cytokine</keyword>
<keyword id="KW-1015">Disulfide bond</keyword>
<keyword id="KW-0339">Growth factor</keyword>
<keyword id="KW-1185">Reference proteome</keyword>
<keyword id="KW-0964">Secreted</keyword>
<keyword id="KW-0732">Signal</keyword>
<sequence>MASISYLLAPLVLAAVLQPTAGAPLDAPTESPAGETSGEEAETGSPDDALAVALESVLGATKLHKNEFLVEFQGEVKYDFLDRYKIPSLPAKCPYSNFGKDACLRRLLEGLLIYSVLLKRVEEEFPSSSILSEVRFYSNILIKELENKVRDRDQVMRLTSSQEEQLLKDTDYPDTFHRKMTAHGILYNLHYFLVDCRRVINKRAKHRESAGSRVVRAVTFYHPKKRS</sequence>
<feature type="signal peptide" evidence="3">
    <location>
        <begin position="1"/>
        <end position="22"/>
    </location>
</feature>
<feature type="chain" id="PRO_0000387952" description="Interleukin-6">
    <location>
        <begin position="23"/>
        <end position="227"/>
    </location>
</feature>
<feature type="region of interest" description="Disordered" evidence="4">
    <location>
        <begin position="24"/>
        <end position="45"/>
    </location>
</feature>
<feature type="disulfide bond" evidence="1">
    <location>
        <begin position="93"/>
        <end position="103"/>
    </location>
</feature>
<dbReference type="EMBL" id="AJ544721">
    <property type="protein sequence ID" value="CAD67608.1"/>
    <property type="molecule type" value="mRNA"/>
</dbReference>
<dbReference type="EMBL" id="AJ544722">
    <property type="protein sequence ID" value="CAD67609.1"/>
    <property type="molecule type" value="Genomic_DNA"/>
</dbReference>
<dbReference type="EMBL" id="AB178902">
    <property type="protein sequence ID" value="BAD18930.1"/>
    <property type="molecule type" value="Genomic_DNA"/>
</dbReference>
<dbReference type="RefSeq" id="NP_001027894.1">
    <property type="nucleotide sequence ID" value="NM_001032722.1"/>
</dbReference>
<dbReference type="SMR" id="Q6L6X6"/>
<dbReference type="STRING" id="31033.ENSTRUP00000021936"/>
<dbReference type="Ensembl" id="ENSTRUT00000022026.3">
    <property type="protein sequence ID" value="ENSTRUP00000021936.1"/>
    <property type="gene ID" value="ENSTRUG00000008735.3"/>
</dbReference>
<dbReference type="GeneID" id="503562"/>
<dbReference type="KEGG" id="tru:503562"/>
<dbReference type="CTD" id="503562"/>
<dbReference type="GeneTree" id="ENSGT00390000000878"/>
<dbReference type="HOGENOM" id="CLU_1253220_0_0_1"/>
<dbReference type="InParanoid" id="Q6L6X6"/>
<dbReference type="OMA" id="DFLVEWK"/>
<dbReference type="OrthoDB" id="8943569at2759"/>
<dbReference type="Proteomes" id="UP000005226">
    <property type="component" value="Chromosome 12"/>
</dbReference>
<dbReference type="GO" id="GO:0005615">
    <property type="term" value="C:extracellular space"/>
    <property type="evidence" value="ECO:0007669"/>
    <property type="project" value="UniProtKB-KW"/>
</dbReference>
<dbReference type="GO" id="GO:0005125">
    <property type="term" value="F:cytokine activity"/>
    <property type="evidence" value="ECO:0007669"/>
    <property type="project" value="UniProtKB-KW"/>
</dbReference>
<dbReference type="GO" id="GO:0008083">
    <property type="term" value="F:growth factor activity"/>
    <property type="evidence" value="ECO:0007669"/>
    <property type="project" value="UniProtKB-KW"/>
</dbReference>
<dbReference type="GO" id="GO:0005138">
    <property type="term" value="F:interleukin-6 receptor binding"/>
    <property type="evidence" value="ECO:0007669"/>
    <property type="project" value="InterPro"/>
</dbReference>
<dbReference type="GO" id="GO:0006953">
    <property type="term" value="P:acute-phase response"/>
    <property type="evidence" value="ECO:0007669"/>
    <property type="project" value="UniProtKB-KW"/>
</dbReference>
<dbReference type="GO" id="GO:0030154">
    <property type="term" value="P:cell differentiation"/>
    <property type="evidence" value="ECO:0007669"/>
    <property type="project" value="InterPro"/>
</dbReference>
<dbReference type="GO" id="GO:0042593">
    <property type="term" value="P:glucose homeostasis"/>
    <property type="evidence" value="ECO:0000250"/>
    <property type="project" value="UniProtKB"/>
</dbReference>
<dbReference type="GO" id="GO:0072574">
    <property type="term" value="P:hepatocyte proliferation"/>
    <property type="evidence" value="ECO:0000250"/>
    <property type="project" value="UniProtKB"/>
</dbReference>
<dbReference type="GO" id="GO:0070102">
    <property type="term" value="P:interleukin-6-mediated signaling pathway"/>
    <property type="evidence" value="ECO:0000250"/>
    <property type="project" value="UniProtKB"/>
</dbReference>
<dbReference type="GO" id="GO:0097421">
    <property type="term" value="P:liver regeneration"/>
    <property type="evidence" value="ECO:0000250"/>
    <property type="project" value="UniProtKB"/>
</dbReference>
<dbReference type="GO" id="GO:1904894">
    <property type="term" value="P:positive regulation of receptor signaling pathway via STAT"/>
    <property type="evidence" value="ECO:0000250"/>
    <property type="project" value="UniProtKB"/>
</dbReference>
<dbReference type="GO" id="GO:0070092">
    <property type="term" value="P:regulation of glucagon secretion"/>
    <property type="evidence" value="ECO:0000250"/>
    <property type="project" value="UniProtKB"/>
</dbReference>
<dbReference type="GO" id="GO:0050796">
    <property type="term" value="P:regulation of insulin secretion"/>
    <property type="evidence" value="ECO:0000250"/>
    <property type="project" value="UniProtKB"/>
</dbReference>
<dbReference type="GO" id="GO:0014823">
    <property type="term" value="P:response to activity"/>
    <property type="evidence" value="ECO:0000250"/>
    <property type="project" value="UniProtKB"/>
</dbReference>
<dbReference type="GO" id="GO:0010573">
    <property type="term" value="P:vascular endothelial growth factor production"/>
    <property type="evidence" value="ECO:0000250"/>
    <property type="project" value="UniProtKB"/>
</dbReference>
<dbReference type="Gene3D" id="1.20.1250.10">
    <property type="match status" value="1"/>
</dbReference>
<dbReference type="InterPro" id="IPR009079">
    <property type="entry name" value="4_helix_cytokine-like_core"/>
</dbReference>
<dbReference type="InterPro" id="IPR003574">
    <property type="entry name" value="IL-6-like"/>
</dbReference>
<dbReference type="InterPro" id="IPR030473">
    <property type="entry name" value="IL6/GCSF/MGF_CS"/>
</dbReference>
<dbReference type="PANTHER" id="PTHR48494">
    <property type="entry name" value="INTERLEUKIN-6"/>
    <property type="match status" value="1"/>
</dbReference>
<dbReference type="PANTHER" id="PTHR48494:SF1">
    <property type="entry name" value="INTERLEUKIN-6"/>
    <property type="match status" value="1"/>
</dbReference>
<dbReference type="Pfam" id="PF00489">
    <property type="entry name" value="IL6"/>
    <property type="match status" value="1"/>
</dbReference>
<dbReference type="SUPFAM" id="SSF47266">
    <property type="entry name" value="4-helical cytokines"/>
    <property type="match status" value="1"/>
</dbReference>
<dbReference type="PROSITE" id="PS00254">
    <property type="entry name" value="INTERLEUKIN_6"/>
    <property type="match status" value="1"/>
</dbReference>
<protein>
    <recommendedName>
        <fullName>Interleukin-6</fullName>
        <shortName>IL-6</shortName>
    </recommendedName>
</protein>
<accession>Q6L6X6</accession>
<comment type="function">
    <text evidence="2">Cytokine with a wide variety of biological functions in immunity, tissue regeneration, and metabolism. Binds to IL6R, then the complex associates to the signaling subunit IL6ST/gp130 to trigger the intracellular IL6-signaling pathway. The interaction with the membrane-bound IL6R and IL6ST stimulates 'classic signaling', whereas the binding of IL6 and soluble IL6R to IL6ST stimulates 'trans-signaling'. Alternatively, 'cluster signaling' occurs when membrane-bound IL6:IL6R complexes on transmitter cells activate IL6ST receptors on neighboring receiver cells.</text>
</comment>
<comment type="subunit">
    <text evidence="2">Component of a hexamer of two molecules each of IL6, IL6R and IL6ST; first binds to IL6R to associate with the signaling subunit IL6ST.</text>
</comment>
<comment type="subcellular location">
    <subcellularLocation>
        <location evidence="2">Secreted</location>
    </subcellularLocation>
</comment>
<comment type="tissue specificity">
    <text evidence="5">After induction, highly expressed in spleen. Can also be expressed in kidney after incubation with PHA.</text>
</comment>
<comment type="induction">
    <text evidence="5">By LPS and PBS.</text>
</comment>
<comment type="similarity">
    <text evidence="6">Belongs to the IL-6 superfamily.</text>
</comment>
<gene>
    <name type="primary">il6</name>
</gene>
<reference key="1">
    <citation type="journal article" date="2005" name="Dev. Comp. Immunol.">
        <title>Characterisation and expression analysis of an interleukin 6 homologue in the Japanese pufferfish, Fugu rubripes.</title>
        <authorList>
            <person name="Bird S."/>
            <person name="Zou J."/>
            <person name="Savan R."/>
            <person name="Kono T."/>
            <person name="Sakai M."/>
            <person name="Woo J."/>
            <person name="Secombes C."/>
        </authorList>
    </citation>
    <scope>NUCLEOTIDE SEQUENCE [GENOMIC DNA / MRNA]</scope>
    <scope>TISSUE SPECIFICITY</scope>
    <scope>INDUCTION</scope>
</reference>
<reference key="2">
    <citation type="submission" date="2004-05" db="EMBL/GenBank/DDBJ databases">
        <title>Characterization of a novel interleukin 6 from fugu.</title>
        <authorList>
            <person name="Ram S."/>
            <person name="Sakai M."/>
        </authorList>
    </citation>
    <scope>NUCLEOTIDE SEQUENCE [GENOMIC DNA]</scope>
</reference>
<name>IL6_TAKRU</name>
<proteinExistence type="evidence at transcript level"/>
<organism>
    <name type="scientific">Takifugu rubripes</name>
    <name type="common">Japanese pufferfish</name>
    <name type="synonym">Fugu rubripes</name>
    <dbReference type="NCBI Taxonomy" id="31033"/>
    <lineage>
        <taxon>Eukaryota</taxon>
        <taxon>Metazoa</taxon>
        <taxon>Chordata</taxon>
        <taxon>Craniata</taxon>
        <taxon>Vertebrata</taxon>
        <taxon>Euteleostomi</taxon>
        <taxon>Actinopterygii</taxon>
        <taxon>Neopterygii</taxon>
        <taxon>Teleostei</taxon>
        <taxon>Neoteleostei</taxon>
        <taxon>Acanthomorphata</taxon>
        <taxon>Eupercaria</taxon>
        <taxon>Tetraodontiformes</taxon>
        <taxon>Tetradontoidea</taxon>
        <taxon>Tetraodontidae</taxon>
        <taxon>Takifugu</taxon>
    </lineage>
</organism>